<keyword id="KW-0975">Bacterial flagellum</keyword>
<keyword id="KW-0973">c-di-GMP</keyword>
<keyword id="KW-0547">Nucleotide-binding</keyword>
<keyword id="KW-1185">Reference proteome</keyword>
<sequence>MGADVEQDDTEQYLKQGTLAVLGVLRELLQNQTPMRVSHPRGQFITRLLHVDKTNMVIDFGSNDYDNQLAQEANELHIVADTRGARIELILTSLQMSEYEGLPAFTAALPGQLKMIQRREFFRVDAPLNPIFFCYVPWPDGTGEGRLRLQDLSIGGIGMLSEGTVPDALSCGDTIKKLRLEMGEYGRFVVDAQLISIGKHSVVGSKCETVVTPRLSLRFLSLNAAQERELQQVIFSLERLARDKAKRFQ</sequence>
<proteinExistence type="inferred from homology"/>
<reference key="1">
    <citation type="journal article" date="2008" name="Environ. Microbiol.">
        <title>The genome of Erwinia tasmaniensis strain Et1/99, a non-pathogenic bacterium in the genus Erwinia.</title>
        <authorList>
            <person name="Kube M."/>
            <person name="Migdoll A.M."/>
            <person name="Mueller I."/>
            <person name="Kuhl H."/>
            <person name="Beck A."/>
            <person name="Reinhardt R."/>
            <person name="Geider K."/>
        </authorList>
    </citation>
    <scope>NUCLEOTIDE SEQUENCE [LARGE SCALE GENOMIC DNA]</scope>
    <source>
        <strain>DSM 17950 / CFBP 7177 / CIP 109463 / NCPPB 4357 / Et1/99</strain>
    </source>
</reference>
<accession>B2VDU2</accession>
<evidence type="ECO:0000255" key="1">
    <source>
        <dbReference type="HAMAP-Rule" id="MF_01457"/>
    </source>
</evidence>
<feature type="chain" id="PRO_0000395273" description="Flagellar brake protein YcgR">
    <location>
        <begin position="1"/>
        <end position="249"/>
    </location>
</feature>
<feature type="domain" description="PilZ" evidence="1">
    <location>
        <begin position="117"/>
        <end position="236"/>
    </location>
</feature>
<comment type="function">
    <text evidence="1">Acts as a flagellar brake, regulating swimming and swarming in a bis-(3'-5') cyclic diguanylic acid (c-di-GMP)-dependent manner. Binds 1 c-di-GMP dimer per subunit. Increasing levels of c-di-GMP lead to decreased motility.</text>
</comment>
<comment type="subunit">
    <text evidence="1">Monomer. Interacts with the flagellar basal bodies.</text>
</comment>
<comment type="subcellular location">
    <subcellularLocation>
        <location evidence="1">Bacterial flagellum basal body</location>
    </subcellularLocation>
</comment>
<comment type="similarity">
    <text evidence="1">Belongs to the YcgR family.</text>
</comment>
<dbReference type="EMBL" id="CU468135">
    <property type="protein sequence ID" value="CAO96981.1"/>
    <property type="molecule type" value="Genomic_DNA"/>
</dbReference>
<dbReference type="RefSeq" id="WP_012441663.1">
    <property type="nucleotide sequence ID" value="NC_010694.1"/>
</dbReference>
<dbReference type="SMR" id="B2VDU2"/>
<dbReference type="STRING" id="465817.ETA_19350"/>
<dbReference type="KEGG" id="eta:ETA_19350"/>
<dbReference type="eggNOG" id="COG5581">
    <property type="taxonomic scope" value="Bacteria"/>
</dbReference>
<dbReference type="HOGENOM" id="CLU_086025_1_0_6"/>
<dbReference type="Proteomes" id="UP000001726">
    <property type="component" value="Chromosome"/>
</dbReference>
<dbReference type="GO" id="GO:0009425">
    <property type="term" value="C:bacterial-type flagellum basal body"/>
    <property type="evidence" value="ECO:0007669"/>
    <property type="project" value="UniProtKB-SubCell"/>
</dbReference>
<dbReference type="GO" id="GO:0035438">
    <property type="term" value="F:cyclic-di-GMP binding"/>
    <property type="evidence" value="ECO:0007669"/>
    <property type="project" value="UniProtKB-UniRule"/>
</dbReference>
<dbReference type="GO" id="GO:0071973">
    <property type="term" value="P:bacterial-type flagellum-dependent cell motility"/>
    <property type="evidence" value="ECO:0007669"/>
    <property type="project" value="UniProtKB-UniRule"/>
</dbReference>
<dbReference type="GO" id="GO:0071945">
    <property type="term" value="P:regulation of bacterial-type flagellum-dependent cell motility by regulation of motor speed"/>
    <property type="evidence" value="ECO:0007669"/>
    <property type="project" value="UniProtKB-UniRule"/>
</dbReference>
<dbReference type="Gene3D" id="2.30.110.10">
    <property type="entry name" value="Electron Transport, Fmn-binding Protein, Chain A"/>
    <property type="match status" value="1"/>
</dbReference>
<dbReference type="Gene3D" id="2.40.10.220">
    <property type="entry name" value="predicted glycosyltransferase like domains"/>
    <property type="match status" value="1"/>
</dbReference>
<dbReference type="HAMAP" id="MF_01457">
    <property type="entry name" value="YcgR"/>
    <property type="match status" value="1"/>
</dbReference>
<dbReference type="InterPro" id="IPR012349">
    <property type="entry name" value="Split_barrel_FMN-bd"/>
</dbReference>
<dbReference type="InterPro" id="IPR023787">
    <property type="entry name" value="T3SS_YcgR"/>
</dbReference>
<dbReference type="InterPro" id="IPR009926">
    <property type="entry name" value="T3SS_YcgR_PilZN"/>
</dbReference>
<dbReference type="Pfam" id="PF07317">
    <property type="entry name" value="PilZN"/>
    <property type="match status" value="1"/>
</dbReference>
<gene>
    <name evidence="1" type="primary">ycgR</name>
    <name type="ordered locus">ETA_19350</name>
</gene>
<organism>
    <name type="scientific">Erwinia tasmaniensis (strain DSM 17950 / CFBP 7177 / CIP 109463 / NCPPB 4357 / Et1/99)</name>
    <dbReference type="NCBI Taxonomy" id="465817"/>
    <lineage>
        <taxon>Bacteria</taxon>
        <taxon>Pseudomonadati</taxon>
        <taxon>Pseudomonadota</taxon>
        <taxon>Gammaproteobacteria</taxon>
        <taxon>Enterobacterales</taxon>
        <taxon>Erwiniaceae</taxon>
        <taxon>Erwinia</taxon>
    </lineage>
</organism>
<protein>
    <recommendedName>
        <fullName evidence="1">Flagellar brake protein YcgR</fullName>
    </recommendedName>
    <alternativeName>
        <fullName evidence="1">Cyclic di-GMP binding protein YcgR</fullName>
    </alternativeName>
</protein>
<name>YCGR_ERWT9</name>